<keyword id="KW-0866">Nonsense-mediated mRNA decay</keyword>
<keyword id="KW-1185">Reference proteome</keyword>
<accession>A8WP66</accession>
<comment type="function">
    <text evidence="1">Involved in nonsense-mediated decay (NMD) of mRNAs containing premature stop codons. Probable component of kinase complex containing smg-1 and recruited to stalled ribosomes (By similarity).</text>
</comment>
<comment type="similarity">
    <text evidence="4">Belongs to the SMG8 family.</text>
</comment>
<name>SMG8_CAEBR</name>
<organism>
    <name type="scientific">Caenorhabditis briggsae</name>
    <dbReference type="NCBI Taxonomy" id="6238"/>
    <lineage>
        <taxon>Eukaryota</taxon>
        <taxon>Metazoa</taxon>
        <taxon>Ecdysozoa</taxon>
        <taxon>Nematoda</taxon>
        <taxon>Chromadorea</taxon>
        <taxon>Rhabditida</taxon>
        <taxon>Rhabditina</taxon>
        <taxon>Rhabditomorpha</taxon>
        <taxon>Rhabditoidea</taxon>
        <taxon>Rhabditidae</taxon>
        <taxon>Peloderinae</taxon>
        <taxon>Caenorhabditis</taxon>
    </lineage>
</organism>
<reference key="1">
    <citation type="journal article" date="2003" name="PLoS Biol.">
        <title>The genome sequence of Caenorhabditis briggsae: a platform for comparative genomics.</title>
        <authorList>
            <person name="Stein L.D."/>
            <person name="Bao Z."/>
            <person name="Blasiar D."/>
            <person name="Blumenthal T."/>
            <person name="Brent M.R."/>
            <person name="Chen N."/>
            <person name="Chinwalla A."/>
            <person name="Clarke L."/>
            <person name="Clee C."/>
            <person name="Coghlan A."/>
            <person name="Coulson A."/>
            <person name="D'Eustachio P."/>
            <person name="Fitch D.H.A."/>
            <person name="Fulton L.A."/>
            <person name="Fulton R.E."/>
            <person name="Griffiths-Jones S."/>
            <person name="Harris T.W."/>
            <person name="Hillier L.W."/>
            <person name="Kamath R."/>
            <person name="Kuwabara P.E."/>
            <person name="Mardis E.R."/>
            <person name="Marra M.A."/>
            <person name="Miner T.L."/>
            <person name="Minx P."/>
            <person name="Mullikin J.C."/>
            <person name="Plumb R.W."/>
            <person name="Rogers J."/>
            <person name="Schein J.E."/>
            <person name="Sohrmann M."/>
            <person name="Spieth J."/>
            <person name="Stajich J.E."/>
            <person name="Wei C."/>
            <person name="Willey D."/>
            <person name="Wilson R.K."/>
            <person name="Durbin R.M."/>
            <person name="Waterston R.H."/>
        </authorList>
    </citation>
    <scope>NUCLEOTIDE SEQUENCE [LARGE SCALE GENOMIC DNA]</scope>
    <source>
        <strain>AF16</strain>
    </source>
</reference>
<protein>
    <recommendedName>
        <fullName evidence="2">Nonsense-mediated mRNA decay factor SMG8</fullName>
    </recommendedName>
    <alternativeName>
        <fullName>Suppressor with morphogenetic effect on genitalia protein 8</fullName>
    </alternativeName>
</protein>
<dbReference type="EMBL" id="HE600951">
    <property type="protein sequence ID" value="CAP22272.1"/>
    <property type="molecule type" value="Genomic_DNA"/>
</dbReference>
<dbReference type="SMR" id="A8WP66"/>
<dbReference type="FunCoup" id="A8WP66">
    <property type="interactions" value="1429"/>
</dbReference>
<dbReference type="STRING" id="6238.A8WP66"/>
<dbReference type="EnsemblMetazoa" id="CBG00981a.1">
    <property type="protein sequence ID" value="CBG00981a.1"/>
    <property type="gene ID" value="WBGene00024282"/>
</dbReference>
<dbReference type="KEGG" id="cbr:CBG_00981"/>
<dbReference type="CTD" id="8573218"/>
<dbReference type="WormBase" id="CBG00981a">
    <property type="protein sequence ID" value="CBP05876"/>
    <property type="gene ID" value="WBGene00024282"/>
    <property type="gene designation" value="Cbr-smg-8"/>
</dbReference>
<dbReference type="eggNOG" id="KOG3692">
    <property type="taxonomic scope" value="Eukaryota"/>
</dbReference>
<dbReference type="HOGENOM" id="CLU_375675_0_0_1"/>
<dbReference type="InParanoid" id="A8WP66"/>
<dbReference type="OMA" id="MHSGCPK"/>
<dbReference type="Proteomes" id="UP000008549">
    <property type="component" value="Unassembled WGS sequence"/>
</dbReference>
<dbReference type="GO" id="GO:0000184">
    <property type="term" value="P:nuclear-transcribed mRNA catabolic process, nonsense-mediated decay"/>
    <property type="evidence" value="ECO:0000250"/>
    <property type="project" value="UniProtKB"/>
</dbReference>
<dbReference type="InterPro" id="IPR019354">
    <property type="entry name" value="SMG8-like"/>
</dbReference>
<dbReference type="PANTHER" id="PTHR13091">
    <property type="entry name" value="AMPLIFIED IN BREAST CANCER 2-RELATED"/>
    <property type="match status" value="1"/>
</dbReference>
<dbReference type="PANTHER" id="PTHR13091:SF0">
    <property type="entry name" value="NONSENSE-MEDIATED MRNA DECAY FACTOR SMG8"/>
    <property type="match status" value="1"/>
</dbReference>
<dbReference type="Pfam" id="PF10220">
    <property type="entry name" value="Smg8_Smg9"/>
    <property type="match status" value="1"/>
</dbReference>
<feature type="chain" id="PRO_0000378168" description="Nonsense-mediated mRNA decay factor SMG8">
    <location>
        <begin position="1"/>
        <end position="871"/>
    </location>
</feature>
<feature type="region of interest" description="Disordered" evidence="3">
    <location>
        <begin position="541"/>
        <end position="596"/>
    </location>
</feature>
<feature type="compositionally biased region" description="Low complexity" evidence="3">
    <location>
        <begin position="573"/>
        <end position="583"/>
    </location>
</feature>
<evidence type="ECO:0000250" key="1"/>
<evidence type="ECO:0000250" key="2">
    <source>
        <dbReference type="UniProtKB" id="Q8ND04"/>
    </source>
</evidence>
<evidence type="ECO:0000256" key="3">
    <source>
        <dbReference type="SAM" id="MobiDB-lite"/>
    </source>
</evidence>
<evidence type="ECO:0000305" key="4"/>
<sequence length="871" mass="100054">MNISEWIEQSRSVFKAQLDTKIKIIGIIGKDYPDHGKGDNINCYLRENVFPVATSDNETCTIFAHFSEDEQLLFLVLNGVDDVANLRKCMESESKNYFEAMAESESQQMRLLHFLFISCHFIVIFEQTSRIDLEFIRFLKKVNTLRSLNRRKVSQRLRDVDFDFDSDGRLTVPYVLMAFQRNNIRTDTNITKKRELYEKLEKNLDHQLTDILKLYDLTGSGNSALCQLSESLQVVHLLNPDSVKRDIITEMFDIFMAEAENGNVARVAANHKLTSNNAFVRFLEDRFRAEKNEISLNIAIDMLEALQFVLDGSLEEKPESLRSQTQTFIKRIQSDHMEEARRLYTNETRPVSGERRGGGFRITEQETMDPSVKIRSKQEHLIRFNEATCYIETVVGINQQEILSQVQTQCNDMWQSDLRACESISMMGHPCVKKVHPTYGDQTVPEARWTAHDASNTLVSTCVCGNKQLVRQEPFTLKEANFDFYEHPDFNCCKGLWRYQFQLYQEDTEEKDDIMWADRESNSLRAAKKMAQREDELAVELDDMELPESLQQSYTSSEDSSEDDDDFAIQTASSEDSLSGSDSYARPGSRRDEFESSKTARDMAVYFAKRIQKLEKLEKMDDFLMGVPNTLTIGKLPMFPSFFLTSLGESNLYKHGAGLKNQPNFKLGGEYLTPAVVFLDVDLDVWCRDLVKFRTDDYTRRGTKDLKDDMPRVKLFVGFEYECSRGHRFFVDHNGEPLIYPRNVNVLKESSARASLGNILNADLPLRRPCTCRKPPLKSAQLQKIHVVTPKAPVKITIDPKILVPGHEGTYGTGQEPLELHHSKYYILHLPVVYSGPSGTWMPGEYNSERMGTLKGGSIKVVYKPVMPFRW</sequence>
<proteinExistence type="inferred from homology"/>
<gene>
    <name type="primary">smg-8</name>
    <name type="ORF">CBG00981</name>
</gene>